<comment type="function">
    <text evidence="5">Isomerization of 3-trans,5-cis-dienoyl-CoA to 2-trans,4-trans-dienoyl-CoA.</text>
</comment>
<comment type="catalytic activity">
    <reaction evidence="5">
        <text>(3E,5Z)-octadienoyl-CoA = (2E,4E)-octadienoyl-CoA</text>
        <dbReference type="Rhea" id="RHEA:45244"/>
        <dbReference type="ChEBI" id="CHEBI:62243"/>
        <dbReference type="ChEBI" id="CHEBI:85108"/>
    </reaction>
</comment>
<comment type="catalytic activity">
    <reaction evidence="6">
        <text>(3E,5Z,8Z,11Z,14Z)-eicosapentaenoyl-CoA = (2E,4E,8Z,11Z,14Z)-eicosapentaenoyl-CoA</text>
        <dbReference type="Rhea" id="RHEA:45224"/>
        <dbReference type="ChEBI" id="CHEBI:85090"/>
        <dbReference type="ChEBI" id="CHEBI:85091"/>
    </reaction>
</comment>
<comment type="biophysicochemical properties">
    <kinetics>
        <KM evidence="5">30 uM for 3,5-octadienoyl-CoA</KM>
        <Vmax evidence="5">2450.0 umol/min/mg enzyme towards 3,5-octadienoyl-CoA</Vmax>
    </kinetics>
</comment>
<comment type="pathway">
    <text evidence="5 6">Lipid metabolism; fatty acid beta-oxidation.</text>
</comment>
<comment type="subunit">
    <text evidence="7">Homohexamer.</text>
</comment>
<comment type="subcellular location">
    <subcellularLocation>
        <location evidence="5 6">Mitochondrion</location>
    </subcellularLocation>
    <subcellularLocation>
        <location evidence="5 6">Peroxisome</location>
    </subcellularLocation>
</comment>
<comment type="tissue specificity">
    <text evidence="5 6">Expressed in heart and liver (at protein level).</text>
</comment>
<comment type="similarity">
    <text evidence="8">Belongs to the enoyl-CoA hydratase/isomerase family.</text>
</comment>
<dbReference type="EC" id="5.3.3.-" evidence="5 6"/>
<dbReference type="EMBL" id="U08976">
    <property type="protein sequence ID" value="AAA82008.1"/>
    <property type="molecule type" value="mRNA"/>
</dbReference>
<dbReference type="EMBL" id="BC062226">
    <property type="protein sequence ID" value="AAH62226.1"/>
    <property type="molecule type" value="mRNA"/>
</dbReference>
<dbReference type="PIR" id="A57626">
    <property type="entry name" value="A57626"/>
</dbReference>
<dbReference type="RefSeq" id="NP_072116.1">
    <property type="nucleotide sequence ID" value="NM_022594.1"/>
</dbReference>
<dbReference type="RefSeq" id="XP_063128849.1">
    <property type="nucleotide sequence ID" value="XM_063272779.1"/>
</dbReference>
<dbReference type="PDB" id="1DCI">
    <property type="method" value="X-ray"/>
    <property type="resolution" value="1.50 A"/>
    <property type="chains" value="A/B/C=54-327"/>
</dbReference>
<dbReference type="PDBsum" id="1DCI"/>
<dbReference type="SMR" id="Q62651"/>
<dbReference type="BioGRID" id="249110">
    <property type="interactions" value="1"/>
</dbReference>
<dbReference type="FunCoup" id="Q62651">
    <property type="interactions" value="2248"/>
</dbReference>
<dbReference type="IntAct" id="Q62651">
    <property type="interactions" value="1"/>
</dbReference>
<dbReference type="MINT" id="Q62651"/>
<dbReference type="STRING" id="10116.ENSRNOP00000027537"/>
<dbReference type="SwissLipids" id="SLP:000001100"/>
<dbReference type="GlyGen" id="Q62651">
    <property type="glycosylation" value="1 site, 1 O-linked glycan (1 site)"/>
</dbReference>
<dbReference type="iPTMnet" id="Q62651"/>
<dbReference type="PhosphoSitePlus" id="Q62651"/>
<dbReference type="SwissPalm" id="Q62651"/>
<dbReference type="jPOST" id="Q62651"/>
<dbReference type="PaxDb" id="10116-ENSRNOP00000027537"/>
<dbReference type="Ensembl" id="ENSRNOT00000096349.1">
    <property type="protein sequence ID" value="ENSRNOP00000085027.1"/>
    <property type="gene ID" value="ENSRNOG00000020308.7"/>
</dbReference>
<dbReference type="GeneID" id="64526"/>
<dbReference type="KEGG" id="rno:64526"/>
<dbReference type="UCSC" id="RGD:69353">
    <property type="organism name" value="rat"/>
</dbReference>
<dbReference type="AGR" id="RGD:69353"/>
<dbReference type="CTD" id="1891"/>
<dbReference type="RGD" id="69353">
    <property type="gene designation" value="Ech1"/>
</dbReference>
<dbReference type="eggNOG" id="KOG1681">
    <property type="taxonomic scope" value="Eukaryota"/>
</dbReference>
<dbReference type="GeneTree" id="ENSGT00940000159610"/>
<dbReference type="HOGENOM" id="CLU_009834_7_0_1"/>
<dbReference type="InParanoid" id="Q62651"/>
<dbReference type="OMA" id="QYVAHVE"/>
<dbReference type="OrthoDB" id="69237at9989"/>
<dbReference type="PhylomeDB" id="Q62651"/>
<dbReference type="TreeFam" id="TF314317"/>
<dbReference type="BRENDA" id="5.3.3.21">
    <property type="organism ID" value="5301"/>
</dbReference>
<dbReference type="Reactome" id="R-RNO-9033241">
    <property type="pathway name" value="Peroxisomal protein import"/>
</dbReference>
<dbReference type="Reactome" id="R-RNO-9837999">
    <property type="pathway name" value="Mitochondrial protein degradation"/>
</dbReference>
<dbReference type="UniPathway" id="UPA00659"/>
<dbReference type="EvolutionaryTrace" id="Q62651"/>
<dbReference type="PRO" id="PR:Q62651"/>
<dbReference type="Proteomes" id="UP000002494">
    <property type="component" value="Chromosome 1"/>
</dbReference>
<dbReference type="Bgee" id="ENSRNOG00000020308">
    <property type="expression patterns" value="Expressed in heart and 19 other cell types or tissues"/>
</dbReference>
<dbReference type="GO" id="GO:0005739">
    <property type="term" value="C:mitochondrion"/>
    <property type="evidence" value="ECO:0000314"/>
    <property type="project" value="UniProtKB"/>
</dbReference>
<dbReference type="GO" id="GO:0005777">
    <property type="term" value="C:peroxisome"/>
    <property type="evidence" value="ECO:0007669"/>
    <property type="project" value="UniProtKB-SubCell"/>
</dbReference>
<dbReference type="GO" id="GO:0051750">
    <property type="term" value="F:delta(3,5)-delta(2,4)-dienoyl-CoA isomerase activity"/>
    <property type="evidence" value="ECO:0000318"/>
    <property type="project" value="GO_Central"/>
</dbReference>
<dbReference type="GO" id="GO:0006635">
    <property type="term" value="P:fatty acid beta-oxidation"/>
    <property type="evidence" value="ECO:0007669"/>
    <property type="project" value="UniProtKB-UniPathway"/>
</dbReference>
<dbReference type="CDD" id="cd06558">
    <property type="entry name" value="crotonase-like"/>
    <property type="match status" value="1"/>
</dbReference>
<dbReference type="FunFam" id="1.10.12.10:FF:000004">
    <property type="entry name" value="Delta3,5-delta2,4-dienoyl-CoA isomerase"/>
    <property type="match status" value="1"/>
</dbReference>
<dbReference type="FunFam" id="3.90.226.10:FF:000024">
    <property type="entry name" value="Delta3,5-delta2,4-dienoyl-CoA isomerase"/>
    <property type="match status" value="1"/>
</dbReference>
<dbReference type="Gene3D" id="3.90.226.10">
    <property type="entry name" value="2-enoyl-CoA Hydratase, Chain A, domain 1"/>
    <property type="match status" value="1"/>
</dbReference>
<dbReference type="Gene3D" id="1.10.12.10">
    <property type="entry name" value="Lyase 2-enoyl-coa Hydratase, Chain A, domain 2"/>
    <property type="match status" value="1"/>
</dbReference>
<dbReference type="InterPro" id="IPR029045">
    <property type="entry name" value="ClpP/crotonase-like_dom_sf"/>
</dbReference>
<dbReference type="InterPro" id="IPR045002">
    <property type="entry name" value="Ech1-like"/>
</dbReference>
<dbReference type="InterPro" id="IPR018376">
    <property type="entry name" value="Enoyl-CoA_hyd/isom_CS"/>
</dbReference>
<dbReference type="InterPro" id="IPR001753">
    <property type="entry name" value="Enoyl-CoA_hydra/iso"/>
</dbReference>
<dbReference type="InterPro" id="IPR014748">
    <property type="entry name" value="Enoyl-CoA_hydra_C"/>
</dbReference>
<dbReference type="NCBIfam" id="NF004794">
    <property type="entry name" value="PRK06142.1"/>
    <property type="match status" value="1"/>
</dbReference>
<dbReference type="PANTHER" id="PTHR43149:SF1">
    <property type="entry name" value="DELTA(3,5)-DELTA(2,4)-DIENOYL-COA ISOMERASE, MITOCHONDRIAL"/>
    <property type="match status" value="1"/>
</dbReference>
<dbReference type="PANTHER" id="PTHR43149">
    <property type="entry name" value="ENOYL-COA HYDRATASE"/>
    <property type="match status" value="1"/>
</dbReference>
<dbReference type="Pfam" id="PF00378">
    <property type="entry name" value="ECH_1"/>
    <property type="match status" value="1"/>
</dbReference>
<dbReference type="SUPFAM" id="SSF52096">
    <property type="entry name" value="ClpP/crotonase"/>
    <property type="match status" value="1"/>
</dbReference>
<dbReference type="PROSITE" id="PS00166">
    <property type="entry name" value="ENOYL_COA_HYDRATASE"/>
    <property type="match status" value="1"/>
</dbReference>
<accession>Q62651</accession>
<reference key="1">
    <citation type="journal article" date="1995" name="Genomics">
        <title>Isolation and characterization of rat and human cDNAs encoding a novel putative peroxisomal enoyl-CoA hydratase.</title>
        <authorList>
            <person name="Fitzpatrick D.R."/>
            <person name="Germain-Lee E."/>
            <person name="Valle D."/>
        </authorList>
    </citation>
    <scope>NUCLEOTIDE SEQUENCE [MRNA]</scope>
    <source>
        <strain>Wistar</strain>
        <tissue>Liver</tissue>
    </source>
</reference>
<reference key="2">
    <citation type="journal article" date="2004" name="Genome Res.">
        <title>The status, quality, and expansion of the NIH full-length cDNA project: the Mammalian Gene Collection (MGC).</title>
        <authorList>
            <consortium name="The MGC Project Team"/>
        </authorList>
    </citation>
    <scope>NUCLEOTIDE SEQUENCE [LARGE SCALE MRNA]</scope>
    <source>
        <tissue>Pituitary</tissue>
    </source>
</reference>
<reference key="3">
    <citation type="submission" date="2006-11" db="UniProtKB">
        <authorList>
            <person name="Lubec G."/>
            <person name="Afjehi-Sadat L."/>
        </authorList>
    </citation>
    <scope>PROTEIN SEQUENCE OF 185-210 AND 219-229</scope>
    <scope>IDENTIFICATION BY MASS SPECTROMETRY</scope>
    <source>
        <strain>Sprague-Dawley</strain>
        <tissue>Spinal cord</tissue>
    </source>
</reference>
<reference key="4">
    <citation type="journal article" date="1998" name="J. Biol. Chem.">
        <title>Delta3,5-delta2,4-dienoyl-CoA isomerase from rat liver. Molecular characterization.</title>
        <authorList>
            <person name="Filppula S.A."/>
            <person name="Yagi A.I."/>
            <person name="Kilpeleainen S.H."/>
            <person name="Novikov D."/>
            <person name="Fitzpatrick D.R."/>
            <person name="Vihinen M."/>
            <person name="Valle D."/>
            <person name="Hiltunen J.K."/>
        </authorList>
    </citation>
    <scope>CHARACTERIZATION</scope>
    <scope>CATALYTIC ACTIVITY</scope>
    <scope>FUNCTION</scope>
    <scope>SUBCELLULAR LOCATION</scope>
    <scope>TISSUE SPECIFICITY</scope>
    <source>
        <tissue>Liver</tissue>
    </source>
</reference>
<reference key="5">
    <citation type="journal article" date="2001" name="J. Biol. Chem.">
        <title>Delta 3,5,delta 2,4-dienoyl-CoA isomerase is a multifunctional isomerase. A structural and mechanistic study.</title>
        <authorList>
            <person name="Zhang D."/>
            <person name="Liang X."/>
            <person name="He X.Y."/>
            <person name="Alipui O.D."/>
            <person name="Yang S.Y."/>
            <person name="Schulz H."/>
        </authorList>
    </citation>
    <scope>SUBCELLULAR LOCATION</scope>
    <scope>FUNCTION</scope>
    <scope>CATALYTIC ACTIVITY</scope>
    <scope>TISSUE SPECIFICITY</scope>
    <scope>MUTAGENESIS OF ASP-176; GLU-196 AND ASP-204</scope>
</reference>
<reference key="6">
    <citation type="journal article" date="1998" name="Structure">
        <title>The crystal structure of dienoyl-CoA isomerase at 1.5 A resolution reveals the importance of aspartate and glutamate sidechains for catalysis.</title>
        <authorList>
            <person name="Modis Y."/>
            <person name="Filppula S.A."/>
            <person name="Novikov D.K."/>
            <person name="Norledge B."/>
            <person name="Hiltunen J.K."/>
            <person name="Wierenga R.K."/>
        </authorList>
    </citation>
    <scope>X-RAY CRYSTALLOGRAPHY (1.5 ANGSTROMS)</scope>
    <scope>SEQUENCE REVISION TO 164</scope>
    <scope>SUBUNIT</scope>
</reference>
<feature type="transit peptide" description="Mitochondrion" evidence="4">
    <location>
        <begin position="1"/>
        <end position="33"/>
    </location>
</feature>
<feature type="chain" id="PRO_0000007419" description="Delta(3,5)-Delta(2,4)-dienoyl-CoA isomerase, mitochondrial">
    <location>
        <begin position="34"/>
        <end position="327"/>
    </location>
</feature>
<feature type="short sequence motif" description="Microbody targeting signal" evidence="4">
    <location>
        <begin position="325"/>
        <end position="327"/>
    </location>
</feature>
<feature type="binding site" evidence="2">
    <location>
        <begin position="115"/>
        <end position="119"/>
    </location>
    <ligand>
        <name>substrate</name>
    </ligand>
</feature>
<feature type="binding site" evidence="2">
    <location>
        <position position="173"/>
    </location>
    <ligand>
        <name>substrate</name>
    </ligand>
</feature>
<feature type="site" description="Important for catalytic activity" evidence="9">
    <location>
        <position position="196"/>
    </location>
</feature>
<feature type="site" description="Important for catalytic activity" evidence="9">
    <location>
        <position position="204"/>
    </location>
</feature>
<feature type="modified residue" description="N6-succinyllysine" evidence="1">
    <location>
        <position position="230"/>
    </location>
</feature>
<feature type="modified residue" description="Phosphoserine" evidence="3">
    <location>
        <position position="267"/>
    </location>
</feature>
<feature type="modified residue" description="N6-succinyllysine" evidence="1">
    <location>
        <position position="316"/>
    </location>
</feature>
<feature type="modified residue" description="N6-acetyllysine" evidence="3">
    <location>
        <position position="326"/>
    </location>
</feature>
<feature type="mutagenesis site" description="Strongly decreases dienoyl-CoA and trienoyl-CoA isomerase activity." evidence="5">
    <original>D</original>
    <variation>A</variation>
    <variation>D</variation>
    <location>
        <position position="176"/>
    </location>
</feature>
<feature type="mutagenesis site" description="Strongly decreases dienoyl-CoA and trienoyl-CoA isomerase activity." evidence="5">
    <original>E</original>
    <variation>D</variation>
    <variation>Q</variation>
    <location>
        <position position="196"/>
    </location>
</feature>
<feature type="mutagenesis site" description="Strongly decreases dienoyl-CoA and trienoyl-CoA isomerase activity." evidence="5">
    <original>D</original>
    <variation>A</variation>
    <variation>N</variation>
    <location>
        <position position="204"/>
    </location>
</feature>
<feature type="sequence conflict" description="In Ref. 1; AAA82008." evidence="8" ref="1">
    <original>A</original>
    <variation>T</variation>
    <location>
        <position position="164"/>
    </location>
</feature>
<feature type="strand" evidence="11">
    <location>
        <begin position="55"/>
        <end position="63"/>
    </location>
</feature>
<feature type="strand" evidence="11">
    <location>
        <begin position="66"/>
        <end position="71"/>
    </location>
</feature>
<feature type="helix" evidence="11">
    <location>
        <begin position="74"/>
        <end position="76"/>
    </location>
</feature>
<feature type="helix" evidence="11">
    <location>
        <begin position="82"/>
        <end position="96"/>
    </location>
</feature>
<feature type="strand" evidence="11">
    <location>
        <begin position="103"/>
        <end position="109"/>
    </location>
</feature>
<feature type="helix" evidence="11">
    <location>
        <begin position="119"/>
        <end position="126"/>
    </location>
</feature>
<feature type="helix" evidence="11">
    <location>
        <begin position="134"/>
        <end position="157"/>
    </location>
</feature>
<feature type="strand" evidence="11">
    <location>
        <begin position="158"/>
        <end position="160"/>
    </location>
</feature>
<feature type="strand" evidence="11">
    <location>
        <begin position="162"/>
        <end position="166"/>
    </location>
</feature>
<feature type="strand" evidence="11">
    <location>
        <begin position="168"/>
        <end position="171"/>
    </location>
</feature>
<feature type="helix" evidence="11">
    <location>
        <begin position="173"/>
        <end position="178"/>
    </location>
</feature>
<feature type="strand" evidence="11">
    <location>
        <begin position="181"/>
        <end position="187"/>
    </location>
</feature>
<feature type="strand" evidence="11">
    <location>
        <begin position="191"/>
        <end position="193"/>
    </location>
</feature>
<feature type="helix" evidence="11">
    <location>
        <begin position="196"/>
        <end position="199"/>
    </location>
</feature>
<feature type="helix" evidence="11">
    <location>
        <begin position="207"/>
        <end position="210"/>
    </location>
</feature>
<feature type="helix" evidence="11">
    <location>
        <begin position="211"/>
        <end position="213"/>
    </location>
</feature>
<feature type="helix" evidence="11">
    <location>
        <begin position="218"/>
        <end position="227"/>
    </location>
</feature>
<feature type="strand" evidence="11">
    <location>
        <begin position="230"/>
        <end position="232"/>
    </location>
</feature>
<feature type="helix" evidence="11">
    <location>
        <begin position="233"/>
        <end position="238"/>
    </location>
</feature>
<feature type="strand" evidence="11">
    <location>
        <begin position="241"/>
        <end position="248"/>
    </location>
</feature>
<feature type="helix" evidence="11">
    <location>
        <begin position="249"/>
        <end position="265"/>
    </location>
</feature>
<feature type="helix" evidence="11">
    <location>
        <begin position="268"/>
        <end position="283"/>
    </location>
</feature>
<feature type="helix" evidence="11">
    <location>
        <begin position="286"/>
        <end position="300"/>
    </location>
</feature>
<feature type="helix" evidence="11">
    <location>
        <begin position="304"/>
        <end position="314"/>
    </location>
</feature>
<feature type="helix" evidence="11">
    <location>
        <begin position="319"/>
        <end position="321"/>
    </location>
</feature>
<gene>
    <name evidence="10" type="primary">Ech1</name>
</gene>
<name>ECH1_RAT</name>
<keyword id="KW-0002">3D-structure</keyword>
<keyword id="KW-0007">Acetylation</keyword>
<keyword id="KW-0903">Direct protein sequencing</keyword>
<keyword id="KW-0276">Fatty acid metabolism</keyword>
<keyword id="KW-0413">Isomerase</keyword>
<keyword id="KW-0443">Lipid metabolism</keyword>
<keyword id="KW-0496">Mitochondrion</keyword>
<keyword id="KW-0576">Peroxisome</keyword>
<keyword id="KW-0597">Phosphoprotein</keyword>
<keyword id="KW-1185">Reference proteome</keyword>
<keyword id="KW-0809">Transit peptide</keyword>
<protein>
    <recommendedName>
        <fullName evidence="8">Delta(3,5)-Delta(2,4)-dienoyl-CoA isomerase, mitochondrial</fullName>
        <ecNumber evidence="5 6">5.3.3.-</ecNumber>
    </recommendedName>
</protein>
<proteinExistence type="evidence at protein level"/>
<organism>
    <name type="scientific">Rattus norvegicus</name>
    <name type="common">Rat</name>
    <dbReference type="NCBI Taxonomy" id="10116"/>
    <lineage>
        <taxon>Eukaryota</taxon>
        <taxon>Metazoa</taxon>
        <taxon>Chordata</taxon>
        <taxon>Craniata</taxon>
        <taxon>Vertebrata</taxon>
        <taxon>Euteleostomi</taxon>
        <taxon>Mammalia</taxon>
        <taxon>Eutheria</taxon>
        <taxon>Euarchontoglires</taxon>
        <taxon>Glires</taxon>
        <taxon>Rodentia</taxon>
        <taxon>Myomorpha</taxon>
        <taxon>Muroidea</taxon>
        <taxon>Muridae</taxon>
        <taxon>Murinae</taxon>
        <taxon>Rattus</taxon>
    </lineage>
</organism>
<sequence>MATAMTVSSKLLGLLMQQLRGTRQLYFNVSLRSLSSSAQEASKRIPEEVSDHNYESIQVTSAQKHVLHVQLNRPEKRNAMNRAFWRELVECFQKISKDSDCRAVVVSGAGKMFTSGIDLMDMASDILQPPGDDVARIAWYLRDLISRYQKTFTVIEKCPKPVIAAIHGGCIGGGVDLISACDIRYCTQDAFFQVKEVDVGLAADVGTLQRLPKVIGNRSLVNELTFTARKMMADEALDSGLVSRVFPDKDVMLNAAFALAADISSKSPVAVQGSKINLIYSRDHSVDESLDYMATWNMSMLQTQDIIKSVQAAMEKKDSKSITFSKL</sequence>
<evidence type="ECO:0000250" key="1">
    <source>
        <dbReference type="UniProtKB" id="O35459"/>
    </source>
</evidence>
<evidence type="ECO:0000250" key="2">
    <source>
        <dbReference type="UniProtKB" id="P42126"/>
    </source>
</evidence>
<evidence type="ECO:0000250" key="3">
    <source>
        <dbReference type="UniProtKB" id="Q13011"/>
    </source>
</evidence>
<evidence type="ECO:0000255" key="4"/>
<evidence type="ECO:0000269" key="5">
    <source>
    </source>
</evidence>
<evidence type="ECO:0000269" key="6">
    <source>
    </source>
</evidence>
<evidence type="ECO:0000269" key="7">
    <source>
    </source>
</evidence>
<evidence type="ECO:0000305" key="8"/>
<evidence type="ECO:0000305" key="9">
    <source>
    </source>
</evidence>
<evidence type="ECO:0000312" key="10">
    <source>
        <dbReference type="RGD" id="69353"/>
    </source>
</evidence>
<evidence type="ECO:0007829" key="11">
    <source>
        <dbReference type="PDB" id="1DCI"/>
    </source>
</evidence>